<comment type="function">
    <text evidence="2 5 6 7 8 10">A cytochrome P450 monooxygenase involved in the metabolism of retinoates (RAs), the active metabolites of vitamin A, and critical signaling molecules in animals (Probable). RAs exist as at least four different isomers: all-trans-RA (atRA), 9-cis-RA, 13-cis-RA, and 9,13-dicis-RA, where atRA is considered to be the biologically active isomer, although 9-cis-RA and 13-cis-RA also have activity (By similarity). Catalyzes the hydroxylation of atRA primarily at C-4 and C-18, thereby contributing to the regulation of atRA homeostasis and signaling (Probable). Hydroxylation of atRA limits its biological activity and initiates a degradative process leading to its eventual elimination (By similarity). Involved in the convertion of atRA to all-trans-4-oxo-RA (Probable). Can oxidize all-trans-13,14-dihydroretinoate (DRA) to metabolites which could include all-trans-4-oxo-DRA, all-trans-4-hydroxy-DRA, all-trans-5,8-epoxy-DRA, and all-trans-18-hydroxy-DRA (Probable). Shows preference for the following substrates: atRA &gt; 9-cis-RA &gt; 13-cis-RA (By similarity). Plays a central role in germ cell development: acts by degrading RAs in the developing testis, preventing STRA8 expression, thereby leading to delay of meiosis (PubMed:16461896, PubMed:16574820, PubMed:19838304). Required for the maintenance of the undifferentiated state of male germ cells during embryonic development in Sertoli cells, inducing arrest in G0 phase of the cell cycle and preventing meiotic entry (PubMed:16461896, PubMed:16574820, PubMed:19838304). Plays a role in skeletal development, both at the level of patterning and in the ossification of bone and the establishment of some synovial joints (PubMed:22019272). Essential for postnatal survival (PubMed:16461896, PubMed:16574820, PubMed:19838304).</text>
</comment>
<comment type="function">
    <text evidence="2">Also has a significant activity in oxidation of tazarotenic acid and may therefore metabolize that xenobiotic in vivo.</text>
</comment>
<comment type="catalytic activity">
    <reaction evidence="10">
        <text>all-trans-retinoate + reduced [NADPH--hemoprotein reductase] + O2 = all-trans-4-hydroxyretinoate + oxidized [NADPH--hemoprotein reductase] + H2O + H(+)</text>
        <dbReference type="Rhea" id="RHEA:51984"/>
        <dbReference type="Rhea" id="RHEA-COMP:11964"/>
        <dbReference type="Rhea" id="RHEA-COMP:11965"/>
        <dbReference type="ChEBI" id="CHEBI:15377"/>
        <dbReference type="ChEBI" id="CHEBI:15378"/>
        <dbReference type="ChEBI" id="CHEBI:15379"/>
        <dbReference type="ChEBI" id="CHEBI:35291"/>
        <dbReference type="ChEBI" id="CHEBI:57618"/>
        <dbReference type="ChEBI" id="CHEBI:58210"/>
        <dbReference type="ChEBI" id="CHEBI:134178"/>
    </reaction>
    <physiologicalReaction direction="left-to-right" evidence="10">
        <dbReference type="Rhea" id="RHEA:51985"/>
    </physiologicalReaction>
</comment>
<comment type="catalytic activity">
    <reaction evidence="10">
        <text>all-trans-retinoate + reduced [NADPH--hemoprotein reductase] + O2 = all-trans-18-hydroxyretinoate + oxidized [NADPH--hemoprotein reductase] + H2O + H(+)</text>
        <dbReference type="Rhea" id="RHEA:55856"/>
        <dbReference type="Rhea" id="RHEA-COMP:11964"/>
        <dbReference type="Rhea" id="RHEA-COMP:11965"/>
        <dbReference type="ChEBI" id="CHEBI:15377"/>
        <dbReference type="ChEBI" id="CHEBI:15378"/>
        <dbReference type="ChEBI" id="CHEBI:15379"/>
        <dbReference type="ChEBI" id="CHEBI:35291"/>
        <dbReference type="ChEBI" id="CHEBI:57618"/>
        <dbReference type="ChEBI" id="CHEBI:58210"/>
        <dbReference type="ChEBI" id="CHEBI:139258"/>
    </reaction>
    <physiologicalReaction direction="left-to-right" evidence="10">
        <dbReference type="Rhea" id="RHEA:55857"/>
    </physiologicalReaction>
</comment>
<comment type="cofactor">
    <cofactor evidence="3">
        <name>heme</name>
        <dbReference type="ChEBI" id="CHEBI:30413"/>
    </cofactor>
</comment>
<comment type="subcellular location">
    <subcellularLocation>
        <location evidence="1">Endoplasmic reticulum membrane</location>
        <topology evidence="1">Peripheral membrane protein</topology>
    </subcellularLocation>
    <subcellularLocation>
        <location evidence="1">Microsome membrane</location>
        <topology evidence="1">Peripheral membrane protein</topology>
    </subcellularLocation>
</comment>
<comment type="developmental stage">
    <text evidence="5 6">In the embryonic male gonad, expressed in somatic cells as early as 11.5 dpc and persist throughout development. Expression is detected in peritubular myoepithelial cells in the postnatal testis, while expression is absent in developing and adult ovaries.</text>
</comment>
<comment type="disruption phenotype">
    <text evidence="6">Germ cells enter meiosis precociously in embryonic testes, due to strong-up-regulation of Stra8.</text>
</comment>
<comment type="similarity">
    <text evidence="9">Belongs to the cytochrome P450 family.</text>
</comment>
<dbReference type="EC" id="1.14.13.-" evidence="2"/>
<dbReference type="EMBL" id="AY134662">
    <property type="protein sequence ID" value="AAN08613.1"/>
    <property type="molecule type" value="mRNA"/>
</dbReference>
<dbReference type="EMBL" id="AK137124">
    <property type="protein sequence ID" value="BAE23242.1"/>
    <property type="molecule type" value="mRNA"/>
</dbReference>
<dbReference type="EMBL" id="AK166211">
    <property type="protein sequence ID" value="BAE38630.1"/>
    <property type="molecule type" value="mRNA"/>
</dbReference>
<dbReference type="EMBL" id="AC153606">
    <property type="status" value="NOT_ANNOTATED_CDS"/>
    <property type="molecule type" value="Genomic_DNA"/>
</dbReference>
<dbReference type="EMBL" id="CH466523">
    <property type="protein sequence ID" value="EDK99117.1"/>
    <property type="molecule type" value="Genomic_DNA"/>
</dbReference>
<dbReference type="EMBL" id="BC059246">
    <property type="protein sequence ID" value="AAH59246.1"/>
    <property type="molecule type" value="mRNA"/>
</dbReference>
<dbReference type="CCDS" id="CCDS20289.1"/>
<dbReference type="RefSeq" id="NP_001171184.1">
    <property type="nucleotide sequence ID" value="NM_001177713.1"/>
</dbReference>
<dbReference type="RefSeq" id="NP_780684.1">
    <property type="nucleotide sequence ID" value="NM_175475.3"/>
</dbReference>
<dbReference type="RefSeq" id="XP_030111198.1">
    <property type="nucleotide sequence ID" value="XM_030255338.2"/>
</dbReference>
<dbReference type="RefSeq" id="XP_036021940.1">
    <property type="nucleotide sequence ID" value="XM_036166047.1"/>
</dbReference>
<dbReference type="SMR" id="Q811W2"/>
<dbReference type="FunCoup" id="Q811W2">
    <property type="interactions" value="483"/>
</dbReference>
<dbReference type="STRING" id="10090.ENSMUSP00000145092"/>
<dbReference type="iPTMnet" id="Q811W2"/>
<dbReference type="PhosphoSitePlus" id="Q811W2"/>
<dbReference type="PaxDb" id="10090-ENSMUSP00000076886"/>
<dbReference type="ProteomicsDB" id="278003"/>
<dbReference type="Pumba" id="Q811W2"/>
<dbReference type="Antibodypedia" id="2113">
    <property type="antibodies" value="276 antibodies from 33 providers"/>
</dbReference>
<dbReference type="Ensembl" id="ENSMUST00000077705.6">
    <property type="protein sequence ID" value="ENSMUSP00000076886.4"/>
    <property type="gene ID" value="ENSMUSG00000063415.13"/>
</dbReference>
<dbReference type="Ensembl" id="ENSMUST00000168003.9">
    <property type="protein sequence ID" value="ENSMUSP00000128391.3"/>
    <property type="gene ID" value="ENSMUSG00000063415.13"/>
</dbReference>
<dbReference type="Ensembl" id="ENSMUST00000204146.3">
    <property type="protein sequence ID" value="ENSMUSP00000145092.2"/>
    <property type="gene ID" value="ENSMUSG00000063415.13"/>
</dbReference>
<dbReference type="GeneID" id="232174"/>
<dbReference type="KEGG" id="mmu:232174"/>
<dbReference type="UCSC" id="uc009coy.2">
    <property type="organism name" value="mouse"/>
</dbReference>
<dbReference type="AGR" id="MGI:2176159"/>
<dbReference type="CTD" id="56603"/>
<dbReference type="MGI" id="MGI:2176159">
    <property type="gene designation" value="Cyp26b1"/>
</dbReference>
<dbReference type="VEuPathDB" id="HostDB:ENSMUSG00000063415"/>
<dbReference type="eggNOG" id="KOG0157">
    <property type="taxonomic scope" value="Eukaryota"/>
</dbReference>
<dbReference type="GeneTree" id="ENSGT00800000124060"/>
<dbReference type="HOGENOM" id="CLU_001570_15_6_1"/>
<dbReference type="InParanoid" id="Q811W2"/>
<dbReference type="OMA" id="WDGQFVN"/>
<dbReference type="OrthoDB" id="1372046at2759"/>
<dbReference type="PhylomeDB" id="Q811W2"/>
<dbReference type="TreeFam" id="TF105093"/>
<dbReference type="Reactome" id="R-MMU-211916">
    <property type="pathway name" value="Vitamins"/>
</dbReference>
<dbReference type="Reactome" id="R-MMU-5365859">
    <property type="pathway name" value="RA biosynthesis pathway"/>
</dbReference>
<dbReference type="BioGRID-ORCS" id="232174">
    <property type="hits" value="1 hit in 78 CRISPR screens"/>
</dbReference>
<dbReference type="ChiTaRS" id="Cyp26b1">
    <property type="organism name" value="mouse"/>
</dbReference>
<dbReference type="PRO" id="PR:Q811W2"/>
<dbReference type="Proteomes" id="UP000000589">
    <property type="component" value="Chromosome 6"/>
</dbReference>
<dbReference type="RNAct" id="Q811W2">
    <property type="molecule type" value="protein"/>
</dbReference>
<dbReference type="Bgee" id="ENSMUSG00000063415">
    <property type="expression patterns" value="Expressed in manus and 221 other cell types or tissues"/>
</dbReference>
<dbReference type="ExpressionAtlas" id="Q811W2">
    <property type="expression patterns" value="baseline and differential"/>
</dbReference>
<dbReference type="GO" id="GO:0005789">
    <property type="term" value="C:endoplasmic reticulum membrane"/>
    <property type="evidence" value="ECO:0007669"/>
    <property type="project" value="UniProtKB-SubCell"/>
</dbReference>
<dbReference type="GO" id="GO:0062183">
    <property type="term" value="F:all-trans retinoic acid 18-hydroxylase activity"/>
    <property type="evidence" value="ECO:0007669"/>
    <property type="project" value="RHEA"/>
</dbReference>
<dbReference type="GO" id="GO:0020037">
    <property type="term" value="F:heme binding"/>
    <property type="evidence" value="ECO:0007669"/>
    <property type="project" value="InterPro"/>
</dbReference>
<dbReference type="GO" id="GO:0005506">
    <property type="term" value="F:iron ion binding"/>
    <property type="evidence" value="ECO:0007669"/>
    <property type="project" value="InterPro"/>
</dbReference>
<dbReference type="GO" id="GO:0016709">
    <property type="term" value="F:oxidoreductase activity, acting on paired donors, with incorporation or reduction of molecular oxygen, NAD(P)H as one donor, and incorporation of one atom of oxygen"/>
    <property type="evidence" value="ECO:0000250"/>
    <property type="project" value="UniProtKB"/>
</dbReference>
<dbReference type="GO" id="GO:0008401">
    <property type="term" value="F:retinoic acid 4-hydroxylase activity"/>
    <property type="evidence" value="ECO:0007669"/>
    <property type="project" value="Ensembl"/>
</dbReference>
<dbReference type="GO" id="GO:0001972">
    <property type="term" value="F:retinoic acid binding"/>
    <property type="evidence" value="ECO:0007669"/>
    <property type="project" value="Ensembl"/>
</dbReference>
<dbReference type="GO" id="GO:0060349">
    <property type="term" value="P:bone morphogenesis"/>
    <property type="evidence" value="ECO:0007669"/>
    <property type="project" value="Ensembl"/>
</dbReference>
<dbReference type="GO" id="GO:0001709">
    <property type="term" value="P:cell fate determination"/>
    <property type="evidence" value="ECO:0000315"/>
    <property type="project" value="MGI"/>
</dbReference>
<dbReference type="GO" id="GO:0071300">
    <property type="term" value="P:cellular response to retinoic acid"/>
    <property type="evidence" value="ECO:0000270"/>
    <property type="project" value="UniProtKB"/>
</dbReference>
<dbReference type="GO" id="GO:0070268">
    <property type="term" value="P:cornification"/>
    <property type="evidence" value="ECO:0000315"/>
    <property type="project" value="MGI"/>
</dbReference>
<dbReference type="GO" id="GO:0030326">
    <property type="term" value="P:embryonic limb morphogenesis"/>
    <property type="evidence" value="ECO:0000315"/>
    <property type="project" value="MGI"/>
</dbReference>
<dbReference type="GO" id="GO:0061436">
    <property type="term" value="P:establishment of skin barrier"/>
    <property type="evidence" value="ECO:0000315"/>
    <property type="project" value="MGI"/>
</dbReference>
<dbReference type="GO" id="GO:0001768">
    <property type="term" value="P:establishment of T cell polarity"/>
    <property type="evidence" value="ECO:0000315"/>
    <property type="project" value="MGI"/>
</dbReference>
<dbReference type="GO" id="GO:0006954">
    <property type="term" value="P:inflammatory response"/>
    <property type="evidence" value="ECO:0000315"/>
    <property type="project" value="MGI"/>
</dbReference>
<dbReference type="GO" id="GO:0001822">
    <property type="term" value="P:kidney development"/>
    <property type="evidence" value="ECO:0007669"/>
    <property type="project" value="Ensembl"/>
</dbReference>
<dbReference type="GO" id="GO:0007140">
    <property type="term" value="P:male meiotic nuclear division"/>
    <property type="evidence" value="ECO:0000315"/>
    <property type="project" value="MGI"/>
</dbReference>
<dbReference type="GO" id="GO:0048387">
    <property type="term" value="P:negative regulation of retinoic acid receptor signaling pathway"/>
    <property type="evidence" value="ECO:0000315"/>
    <property type="project" value="MGI"/>
</dbReference>
<dbReference type="GO" id="GO:0010628">
    <property type="term" value="P:positive regulation of gene expression"/>
    <property type="evidence" value="ECO:0000315"/>
    <property type="project" value="UniProtKB"/>
</dbReference>
<dbReference type="GO" id="GO:2001037">
    <property type="term" value="P:positive regulation of tongue muscle cell differentiation"/>
    <property type="evidence" value="ECO:0000315"/>
    <property type="project" value="UniProtKB"/>
</dbReference>
<dbReference type="GO" id="GO:0009954">
    <property type="term" value="P:proximal/distal pattern formation"/>
    <property type="evidence" value="ECO:0000315"/>
    <property type="project" value="MGI"/>
</dbReference>
<dbReference type="GO" id="GO:0048385">
    <property type="term" value="P:regulation of retinoic acid receptor signaling pathway"/>
    <property type="evidence" value="ECO:0000315"/>
    <property type="project" value="MGI"/>
</dbReference>
<dbReference type="GO" id="GO:0045580">
    <property type="term" value="P:regulation of T cell differentiation"/>
    <property type="evidence" value="ECO:0000315"/>
    <property type="project" value="MGI"/>
</dbReference>
<dbReference type="GO" id="GO:0033189">
    <property type="term" value="P:response to vitamin A"/>
    <property type="evidence" value="ECO:0007669"/>
    <property type="project" value="Ensembl"/>
</dbReference>
<dbReference type="GO" id="GO:0034653">
    <property type="term" value="P:retinoic acid catabolic process"/>
    <property type="evidence" value="ECO:0000305"/>
    <property type="project" value="MGI"/>
</dbReference>
<dbReference type="GO" id="GO:0042573">
    <property type="term" value="P:retinoic acid metabolic process"/>
    <property type="evidence" value="ECO:0000250"/>
    <property type="project" value="UniProtKB"/>
</dbReference>
<dbReference type="GO" id="GO:0048384">
    <property type="term" value="P:retinoic acid receptor signaling pathway"/>
    <property type="evidence" value="ECO:0000314"/>
    <property type="project" value="MGI"/>
</dbReference>
<dbReference type="GO" id="GO:0007283">
    <property type="term" value="P:spermatogenesis"/>
    <property type="evidence" value="ECO:0000315"/>
    <property type="project" value="MGI"/>
</dbReference>
<dbReference type="GO" id="GO:0043587">
    <property type="term" value="P:tongue morphogenesis"/>
    <property type="evidence" value="ECO:0000315"/>
    <property type="project" value="UniProtKB"/>
</dbReference>
<dbReference type="GO" id="GO:0006805">
    <property type="term" value="P:xenobiotic metabolic process"/>
    <property type="evidence" value="ECO:0000250"/>
    <property type="project" value="UniProtKB"/>
</dbReference>
<dbReference type="CDD" id="cd20637">
    <property type="entry name" value="CYP26B1"/>
    <property type="match status" value="1"/>
</dbReference>
<dbReference type="FunFam" id="1.10.630.10:FF:000009">
    <property type="entry name" value="Cytochrome P450 26B1 isoform 1"/>
    <property type="match status" value="1"/>
</dbReference>
<dbReference type="Gene3D" id="1.10.630.10">
    <property type="entry name" value="Cytochrome P450"/>
    <property type="match status" value="1"/>
</dbReference>
<dbReference type="InterPro" id="IPR001128">
    <property type="entry name" value="Cyt_P450"/>
</dbReference>
<dbReference type="InterPro" id="IPR017972">
    <property type="entry name" value="Cyt_P450_CS"/>
</dbReference>
<dbReference type="InterPro" id="IPR002403">
    <property type="entry name" value="Cyt_P450_E_grp-IV"/>
</dbReference>
<dbReference type="InterPro" id="IPR036396">
    <property type="entry name" value="Cyt_P450_sf"/>
</dbReference>
<dbReference type="PANTHER" id="PTHR24286">
    <property type="entry name" value="CYTOCHROME P450 26"/>
    <property type="match status" value="1"/>
</dbReference>
<dbReference type="PANTHER" id="PTHR24286:SF177">
    <property type="entry name" value="CYTOCHROME P450 26B1"/>
    <property type="match status" value="1"/>
</dbReference>
<dbReference type="Pfam" id="PF00067">
    <property type="entry name" value="p450"/>
    <property type="match status" value="1"/>
</dbReference>
<dbReference type="PRINTS" id="PR00465">
    <property type="entry name" value="EP450IV"/>
</dbReference>
<dbReference type="PRINTS" id="PR00385">
    <property type="entry name" value="P450"/>
</dbReference>
<dbReference type="SUPFAM" id="SSF48264">
    <property type="entry name" value="Cytochrome P450"/>
    <property type="match status" value="1"/>
</dbReference>
<dbReference type="PROSITE" id="PS00086">
    <property type="entry name" value="CYTOCHROME_P450"/>
    <property type="match status" value="1"/>
</dbReference>
<organism>
    <name type="scientific">Mus musculus</name>
    <name type="common">Mouse</name>
    <dbReference type="NCBI Taxonomy" id="10090"/>
    <lineage>
        <taxon>Eukaryota</taxon>
        <taxon>Metazoa</taxon>
        <taxon>Chordata</taxon>
        <taxon>Craniata</taxon>
        <taxon>Vertebrata</taxon>
        <taxon>Euteleostomi</taxon>
        <taxon>Mammalia</taxon>
        <taxon>Eutheria</taxon>
        <taxon>Euarchontoglires</taxon>
        <taxon>Glires</taxon>
        <taxon>Rodentia</taxon>
        <taxon>Myomorpha</taxon>
        <taxon>Muroidea</taxon>
        <taxon>Muridae</taxon>
        <taxon>Murinae</taxon>
        <taxon>Mus</taxon>
        <taxon>Mus</taxon>
    </lineage>
</organism>
<accession>Q811W2</accession>
<accession>Q3TM12</accession>
<feature type="chain" id="PRO_0000416905" description="Cytochrome P450 26B1">
    <location>
        <begin position="1"/>
        <end position="512"/>
    </location>
</feature>
<feature type="binding site" description="axial binding residue" evidence="4">
    <location>
        <position position="441"/>
    </location>
    <ligand>
        <name>heme</name>
        <dbReference type="ChEBI" id="CHEBI:30413"/>
    </ligand>
    <ligandPart>
        <name>Fe</name>
        <dbReference type="ChEBI" id="CHEBI:18248"/>
    </ligandPart>
</feature>
<feature type="sequence conflict" description="In Ref. 2; BAE38630." evidence="9" ref="2">
    <original>LQ</original>
    <variation>TR</variation>
    <location>
        <begin position="67"/>
        <end position="68"/>
    </location>
</feature>
<name>CP26B_MOUSE</name>
<keyword id="KW-0256">Endoplasmic reticulum</keyword>
<keyword id="KW-0349">Heme</keyword>
<keyword id="KW-0408">Iron</keyword>
<keyword id="KW-0443">Lipid metabolism</keyword>
<keyword id="KW-0472">Membrane</keyword>
<keyword id="KW-0479">Metal-binding</keyword>
<keyword id="KW-0492">Microsome</keyword>
<keyword id="KW-0503">Monooxygenase</keyword>
<keyword id="KW-0560">Oxidoreductase</keyword>
<keyword id="KW-1185">Reference proteome</keyword>
<proteinExistence type="evidence at protein level"/>
<sequence>MLFEGLELVSALATLAACLVSVTLLLAVSQQLWQLRWAATRDKSCKLPIPKGSMGFPLIGETGHWLLQGSGFQSSRREKYGNVFKTHLLGRPLIRVTGAENVRKILLGEHQLVSTEWPRSARVLLGPNTVANSIGDIHRNKRKVFSKIFSHEALESYLPKIQLVIQDTLRAWSSQPEAINVYQEAQRLTFRMAVRVLLGFSIPEEDLGHLFEVYQQFVENVFSLPVDLPFSGYRRGIQARQILQKGLEKAIREKLQCTQGKDYSDALDILIESSKEHGKEMTMQELKDGTLELIFAAYATTASASTSLIMQLLKHPAVLEKLREELRAQGLLHGGGCPCEGTLRLDTLSSLRYLDCVIKEVMRLFTPVSGGYRTVLQTFELDGFQIPKGWSVMYSIRDTHDTAPVFKDVNVFDPDRFSQARSEDKDGRFHYLPFGGGVRTCLGKHLAKLFLKVLAVELASTSRFELATRTFPRITLVPVLHPVDGLSVKFFGLDSNQNEILPETEAMLSATV</sequence>
<reference key="1">
    <citation type="journal article" date="2002" name="Gene Expr. Patterns">
        <title>Sexually dimorphic gene expression in the developing mouse gonad.</title>
        <authorList>
            <person name="Menke D.B."/>
            <person name="Page D.C."/>
        </authorList>
    </citation>
    <scope>NUCLEOTIDE SEQUENCE [MRNA]</scope>
    <scope>TISSUE SPECIFICITY</scope>
    <source>
        <strain>C57BL/6J</strain>
        <tissue>Testis</tissue>
    </source>
</reference>
<reference key="2">
    <citation type="journal article" date="2005" name="Science">
        <title>The transcriptional landscape of the mammalian genome.</title>
        <authorList>
            <person name="Carninci P."/>
            <person name="Kasukawa T."/>
            <person name="Katayama S."/>
            <person name="Gough J."/>
            <person name="Frith M.C."/>
            <person name="Maeda N."/>
            <person name="Oyama R."/>
            <person name="Ravasi T."/>
            <person name="Lenhard B."/>
            <person name="Wells C."/>
            <person name="Kodzius R."/>
            <person name="Shimokawa K."/>
            <person name="Bajic V.B."/>
            <person name="Brenner S.E."/>
            <person name="Batalov S."/>
            <person name="Forrest A.R."/>
            <person name="Zavolan M."/>
            <person name="Davis M.J."/>
            <person name="Wilming L.G."/>
            <person name="Aidinis V."/>
            <person name="Allen J.E."/>
            <person name="Ambesi-Impiombato A."/>
            <person name="Apweiler R."/>
            <person name="Aturaliya R.N."/>
            <person name="Bailey T.L."/>
            <person name="Bansal M."/>
            <person name="Baxter L."/>
            <person name="Beisel K.W."/>
            <person name="Bersano T."/>
            <person name="Bono H."/>
            <person name="Chalk A.M."/>
            <person name="Chiu K.P."/>
            <person name="Choudhary V."/>
            <person name="Christoffels A."/>
            <person name="Clutterbuck D.R."/>
            <person name="Crowe M.L."/>
            <person name="Dalla E."/>
            <person name="Dalrymple B.P."/>
            <person name="de Bono B."/>
            <person name="Della Gatta G."/>
            <person name="di Bernardo D."/>
            <person name="Down T."/>
            <person name="Engstrom P."/>
            <person name="Fagiolini M."/>
            <person name="Faulkner G."/>
            <person name="Fletcher C.F."/>
            <person name="Fukushima T."/>
            <person name="Furuno M."/>
            <person name="Futaki S."/>
            <person name="Gariboldi M."/>
            <person name="Georgii-Hemming P."/>
            <person name="Gingeras T.R."/>
            <person name="Gojobori T."/>
            <person name="Green R.E."/>
            <person name="Gustincich S."/>
            <person name="Harbers M."/>
            <person name="Hayashi Y."/>
            <person name="Hensch T.K."/>
            <person name="Hirokawa N."/>
            <person name="Hill D."/>
            <person name="Huminiecki L."/>
            <person name="Iacono M."/>
            <person name="Ikeo K."/>
            <person name="Iwama A."/>
            <person name="Ishikawa T."/>
            <person name="Jakt M."/>
            <person name="Kanapin A."/>
            <person name="Katoh M."/>
            <person name="Kawasawa Y."/>
            <person name="Kelso J."/>
            <person name="Kitamura H."/>
            <person name="Kitano H."/>
            <person name="Kollias G."/>
            <person name="Krishnan S.P."/>
            <person name="Kruger A."/>
            <person name="Kummerfeld S.K."/>
            <person name="Kurochkin I.V."/>
            <person name="Lareau L.F."/>
            <person name="Lazarevic D."/>
            <person name="Lipovich L."/>
            <person name="Liu J."/>
            <person name="Liuni S."/>
            <person name="McWilliam S."/>
            <person name="Madan Babu M."/>
            <person name="Madera M."/>
            <person name="Marchionni L."/>
            <person name="Matsuda H."/>
            <person name="Matsuzawa S."/>
            <person name="Miki H."/>
            <person name="Mignone F."/>
            <person name="Miyake S."/>
            <person name="Morris K."/>
            <person name="Mottagui-Tabar S."/>
            <person name="Mulder N."/>
            <person name="Nakano N."/>
            <person name="Nakauchi H."/>
            <person name="Ng P."/>
            <person name="Nilsson R."/>
            <person name="Nishiguchi S."/>
            <person name="Nishikawa S."/>
            <person name="Nori F."/>
            <person name="Ohara O."/>
            <person name="Okazaki Y."/>
            <person name="Orlando V."/>
            <person name="Pang K.C."/>
            <person name="Pavan W.J."/>
            <person name="Pavesi G."/>
            <person name="Pesole G."/>
            <person name="Petrovsky N."/>
            <person name="Piazza S."/>
            <person name="Reed J."/>
            <person name="Reid J.F."/>
            <person name="Ring B.Z."/>
            <person name="Ringwald M."/>
            <person name="Rost B."/>
            <person name="Ruan Y."/>
            <person name="Salzberg S.L."/>
            <person name="Sandelin A."/>
            <person name="Schneider C."/>
            <person name="Schoenbach C."/>
            <person name="Sekiguchi K."/>
            <person name="Semple C.A."/>
            <person name="Seno S."/>
            <person name="Sessa L."/>
            <person name="Sheng Y."/>
            <person name="Shibata Y."/>
            <person name="Shimada H."/>
            <person name="Shimada K."/>
            <person name="Silva D."/>
            <person name="Sinclair B."/>
            <person name="Sperling S."/>
            <person name="Stupka E."/>
            <person name="Sugiura K."/>
            <person name="Sultana R."/>
            <person name="Takenaka Y."/>
            <person name="Taki K."/>
            <person name="Tammoja K."/>
            <person name="Tan S.L."/>
            <person name="Tang S."/>
            <person name="Taylor M.S."/>
            <person name="Tegner J."/>
            <person name="Teichmann S.A."/>
            <person name="Ueda H.R."/>
            <person name="van Nimwegen E."/>
            <person name="Verardo R."/>
            <person name="Wei C.L."/>
            <person name="Yagi K."/>
            <person name="Yamanishi H."/>
            <person name="Zabarovsky E."/>
            <person name="Zhu S."/>
            <person name="Zimmer A."/>
            <person name="Hide W."/>
            <person name="Bult C."/>
            <person name="Grimmond S.M."/>
            <person name="Teasdale R.D."/>
            <person name="Liu E.T."/>
            <person name="Brusic V."/>
            <person name="Quackenbush J."/>
            <person name="Wahlestedt C."/>
            <person name="Mattick J.S."/>
            <person name="Hume D.A."/>
            <person name="Kai C."/>
            <person name="Sasaki D."/>
            <person name="Tomaru Y."/>
            <person name="Fukuda S."/>
            <person name="Kanamori-Katayama M."/>
            <person name="Suzuki M."/>
            <person name="Aoki J."/>
            <person name="Arakawa T."/>
            <person name="Iida J."/>
            <person name="Imamura K."/>
            <person name="Itoh M."/>
            <person name="Kato T."/>
            <person name="Kawaji H."/>
            <person name="Kawagashira N."/>
            <person name="Kawashima T."/>
            <person name="Kojima M."/>
            <person name="Kondo S."/>
            <person name="Konno H."/>
            <person name="Nakano K."/>
            <person name="Ninomiya N."/>
            <person name="Nishio T."/>
            <person name="Okada M."/>
            <person name="Plessy C."/>
            <person name="Shibata K."/>
            <person name="Shiraki T."/>
            <person name="Suzuki S."/>
            <person name="Tagami M."/>
            <person name="Waki K."/>
            <person name="Watahiki A."/>
            <person name="Okamura-Oho Y."/>
            <person name="Suzuki H."/>
            <person name="Kawai J."/>
            <person name="Hayashizaki Y."/>
        </authorList>
    </citation>
    <scope>NUCLEOTIDE SEQUENCE [LARGE SCALE MRNA]</scope>
    <source>
        <strain>C57BL/6J</strain>
        <tissue>Embryo</tissue>
        <tissue>Mammary gland</tissue>
    </source>
</reference>
<reference key="3">
    <citation type="journal article" date="2009" name="PLoS Biol.">
        <title>Lineage-specific biology revealed by a finished genome assembly of the mouse.</title>
        <authorList>
            <person name="Church D.M."/>
            <person name="Goodstadt L."/>
            <person name="Hillier L.W."/>
            <person name="Zody M.C."/>
            <person name="Goldstein S."/>
            <person name="She X."/>
            <person name="Bult C.J."/>
            <person name="Agarwala R."/>
            <person name="Cherry J.L."/>
            <person name="DiCuccio M."/>
            <person name="Hlavina W."/>
            <person name="Kapustin Y."/>
            <person name="Meric P."/>
            <person name="Maglott D."/>
            <person name="Birtle Z."/>
            <person name="Marques A.C."/>
            <person name="Graves T."/>
            <person name="Zhou S."/>
            <person name="Teague B."/>
            <person name="Potamousis K."/>
            <person name="Churas C."/>
            <person name="Place M."/>
            <person name="Herschleb J."/>
            <person name="Runnheim R."/>
            <person name="Forrest D."/>
            <person name="Amos-Landgraf J."/>
            <person name="Schwartz D.C."/>
            <person name="Cheng Z."/>
            <person name="Lindblad-Toh K."/>
            <person name="Eichler E.E."/>
            <person name="Ponting C.P."/>
        </authorList>
    </citation>
    <scope>NUCLEOTIDE SEQUENCE [LARGE SCALE GENOMIC DNA]</scope>
    <source>
        <strain>C57BL/6J</strain>
    </source>
</reference>
<reference key="4">
    <citation type="submission" date="2005-07" db="EMBL/GenBank/DDBJ databases">
        <authorList>
            <person name="Mural R.J."/>
            <person name="Adams M.D."/>
            <person name="Myers E.W."/>
            <person name="Smith H.O."/>
            <person name="Venter J.C."/>
        </authorList>
    </citation>
    <scope>NUCLEOTIDE SEQUENCE [LARGE SCALE GENOMIC DNA]</scope>
</reference>
<reference key="5">
    <citation type="journal article" date="2004" name="Genome Res.">
        <title>The status, quality, and expansion of the NIH full-length cDNA project: the Mammalian Gene Collection (MGC).</title>
        <authorList>
            <consortium name="The MGC Project Team"/>
        </authorList>
    </citation>
    <scope>NUCLEOTIDE SEQUENCE [LARGE SCALE MRNA]</scope>
    <source>
        <strain>C57BL/6J</strain>
        <tissue>Brain</tissue>
    </source>
</reference>
<reference key="6">
    <citation type="journal article" date="2005" name="J. Biol. Chem.">
        <title>Metabolism and transactivation activity of 13,14-dihydroretinoic acid.</title>
        <authorList>
            <person name="Moise A.R."/>
            <person name="Kuksa V."/>
            <person name="Blaner W.S."/>
            <person name="Baehr W."/>
            <person name="Palczewski K."/>
        </authorList>
    </citation>
    <scope>FUNCTION</scope>
    <scope>CATALYTIC ACTIVITY</scope>
</reference>
<reference key="7">
    <citation type="journal article" date="2006" name="Science">
        <title>Retinoid signaling determines germ cell fate in mice.</title>
        <authorList>
            <person name="Bowles J."/>
            <person name="Knight D."/>
            <person name="Smith C."/>
            <person name="Wilhelm D."/>
            <person name="Richman J."/>
            <person name="Mamiya S."/>
            <person name="Yashiro K."/>
            <person name="Chawengsaksophak K."/>
            <person name="Wilson M.J."/>
            <person name="Rossant J."/>
            <person name="Hamada H."/>
            <person name="Koopman P."/>
        </authorList>
    </citation>
    <scope>FUNCTION</scope>
    <scope>DISRUPTION PHENOTYPE</scope>
    <scope>DEVELOPMENTAL STAGE</scope>
</reference>
<reference key="8">
    <citation type="journal article" date="2006" name="Proc. Natl. Acad. Sci. U.S.A.">
        <title>Retinoic acid regulates sex-specific timing of meiotic initiation in mice.</title>
        <authorList>
            <person name="Koubova J."/>
            <person name="Menke D.B."/>
            <person name="Zhou Q."/>
            <person name="Capel B."/>
            <person name="Griswold M.D."/>
            <person name="Page D.C."/>
        </authorList>
    </citation>
    <scope>FUNCTION</scope>
    <scope>DEVELOPMENTAL STAGE</scope>
</reference>
<reference key="9">
    <citation type="journal article" date="2009" name="PLoS ONE">
        <title>Cyp26b1 expression in murine Sertoli cells is required to maintain male germ cells in an undifferentiated state during embryogenesis.</title>
        <authorList>
            <person name="Li H."/>
            <person name="MacLean G."/>
            <person name="Cameron D."/>
            <person name="Clagett-Dame M."/>
            <person name="Petkovich M."/>
        </authorList>
    </citation>
    <scope>FUNCTION</scope>
</reference>
<reference key="10">
    <citation type="journal article" date="2011" name="Am. J. Hum. Genet.">
        <title>Craniosynostosis and multiple skeletal anomalies in humans and zebrafish result from a defect in the localized degradation of retinoic acid.</title>
        <authorList>
            <person name="Laue K."/>
            <person name="Pogoda H.M."/>
            <person name="Daniel P.B."/>
            <person name="van Haeringen A."/>
            <person name="Alanay Y."/>
            <person name="von Ameln S."/>
            <person name="Rachwalski M."/>
            <person name="Morgan T."/>
            <person name="Gray M.J."/>
            <person name="Breuning M.H."/>
            <person name="Sawyer G.M."/>
            <person name="Sutherland-Smith A.J."/>
            <person name="Nikkels P.G."/>
            <person name="Kubisch C."/>
            <person name="Bloch W."/>
            <person name="Wollnik B."/>
            <person name="Hammerschmidt M."/>
            <person name="Robertson S.P."/>
        </authorList>
    </citation>
    <scope>FUNCTION IN SKELETAL DEVELOPMENT</scope>
</reference>
<protein>
    <recommendedName>
        <fullName>Cytochrome P450 26B1</fullName>
        <ecNumber evidence="2">1.14.13.-</ecNumber>
    </recommendedName>
    <alternativeName>
        <fullName>Cytochrome P450 retinoic acid-inactivating 2</fullName>
        <shortName>Cytochrome P450RAI-2</shortName>
    </alternativeName>
</protein>
<evidence type="ECO:0000250" key="1">
    <source>
        <dbReference type="UniProtKB" id="O43174"/>
    </source>
</evidence>
<evidence type="ECO:0000250" key="2">
    <source>
        <dbReference type="UniProtKB" id="Q9NR63"/>
    </source>
</evidence>
<evidence type="ECO:0000250" key="3">
    <source>
        <dbReference type="UniProtKB" id="Q9Y6A2"/>
    </source>
</evidence>
<evidence type="ECO:0000255" key="4"/>
<evidence type="ECO:0000269" key="5">
    <source>
    </source>
</evidence>
<evidence type="ECO:0000269" key="6">
    <source>
    </source>
</evidence>
<evidence type="ECO:0000269" key="7">
    <source>
    </source>
</evidence>
<evidence type="ECO:0000269" key="8">
    <source>
    </source>
</evidence>
<evidence type="ECO:0000305" key="9"/>
<evidence type="ECO:0000305" key="10">
    <source>
    </source>
</evidence>
<gene>
    <name type="primary">Cyp26b1</name>
</gene>